<comment type="function">
    <text evidence="17 20">Receptor for both interleukin 4 and interleukin 13 (PubMed:17030238). Couples to the JAK1/2/3-STAT6 pathway. The IL4 response is involved in promoting Th2 differentiation. The IL4/IL13 responses are involved in regulating IgE production and, chemokine and mucus production at sites of allergic inflammation. In certain cell types, can signal through activation of insulin receptor substrates, IRS1/IRS2.</text>
</comment>
<comment type="function">
    <text evidence="20">Soluble IL4R (sIL4R) inhibits IL4-mediated cell proliferation and IL5 up-regulation by T-cells.</text>
</comment>
<comment type="subunit">
    <text evidence="2 14 17 18 19 22">The functional IL4 receptor is formed by initial binding of IL4 to IL4R. Subsequent recruitment to the complex of the common gamma chain, in immune cells, creates a type I receptor and, in non-immune cells, of IL13RA1 forms a type II receptor. IL4R can also interact with the IL13/IL13RA1 complex to form a similar type II receptor (PubMed:7775445, PubMed:8804422). Interacts with PIK3C3 (By similarity). Interacts with the SH2-containing phosphatases, PTPN6/SHIP1, PTPN11/SHIP2 and INPP5D/SHIP (PubMed:11714803). Interacts with JAK1 through a Box 1-containing region; inhibited by SOCS5. Interacts with SOCS5; inhibits IL4 signaling (By similarity). Interacts with JAK3 (PubMed:7538655). Interacts with CLM1 (By similarity). Interacts with IL13RA2 (PubMed:17030238).</text>
</comment>
<comment type="interaction">
    <interactant intactId="EBI-367009">
        <id>P24394</id>
    </interactant>
    <interactant intactId="EBI-367025">
        <id>P05112</id>
        <label>IL4</label>
    </interactant>
    <organismsDiffer>false</organismsDiffer>
    <experiments>7</experiments>
</comment>
<comment type="interaction">
    <interactant intactId="EBI-367009">
        <id>P24394</id>
    </interactant>
    <interactant intactId="EBI-1186478">
        <id>P42226</id>
        <label>STAT6</label>
    </interactant>
    <organismsDiffer>false</organismsDiffer>
    <experiments>4</experiments>
</comment>
<comment type="subcellular location">
    <subcellularLocation>
        <location>Cell membrane</location>
        <topology>Single-pass type I membrane protein</topology>
    </subcellularLocation>
</comment>
<comment type="subcellular location">
    <molecule>Isoform 2</molecule>
    <subcellularLocation>
        <location>Secreted</location>
    </subcellularLocation>
</comment>
<comment type="alternative products">
    <event type="alternative splicing"/>
    <isoform>
        <id>P24394-1</id>
        <name>1</name>
        <name>Membrane-bound form</name>
        <sequence type="displayed"/>
    </isoform>
    <isoform>
        <id>P24394-2</id>
        <name>2</name>
        <name>Soluble form</name>
        <name>sIL4Ralpha/splice</name>
        <sequence type="described" ref="VSP_011116 VSP_011117"/>
    </isoform>
    <isoform>
        <id>P24394-3</id>
        <name>3</name>
        <sequence type="described" ref="VSP_053738"/>
    </isoform>
</comment>
<comment type="tissue specificity">
    <text>Isoform 1 and isoform 2 are highly expressed in activated T-cells.</text>
</comment>
<comment type="domain">
    <text>The extracellular domain represents the IL4 binding protein (IL4BP).</text>
</comment>
<comment type="domain">
    <text>The WSXWS motif appears to be necessary for proper protein folding and thereby efficient intracellular transport and cell-surface receptor binding.</text>
</comment>
<comment type="domain">
    <text>The box 1 motif is required for JAK interaction and/or activation.</text>
</comment>
<comment type="domain">
    <text>Contains 1 copy of a cytoplasmic motif that is referred to as the immunoreceptor tyrosine-based inhibitor motif (ITIM). This motif is involved in modulation of cellular responses. The phosphorylated ITIM motif can bind the SH2 domain of several SH2-containing phosphatases.</text>
</comment>
<comment type="PTM">
    <text evidence="21">On IL4 binding, phosphorylated on C-terminal tyrosine residues. Phosphorylation on any one of tyrosine residues, Tyr-575, Tyr-603 or Tyr-631, is required for STAT6-induced gene induction.</text>
</comment>
<comment type="PTM">
    <text evidence="8">The soluble form (sIL4R/IL4BP) can also be produced by proteolytic cleavage at the cell surface (shedding) by a metalloproteinase.</text>
</comment>
<comment type="polymorphism">
    <text>Allelic variants in IL4RA are associated with a susceptibility to atopy, an immunological condition that can lead to clinical symptoms such as allergic rhinitis, sinusitis, asthma and eczema.</text>
</comment>
<comment type="polymorphism">
    <text>Allelic variants in IL4RA are associated with cedar pollen sensitization. Individuals develop Japanese cedar pollinosis with increased exposure to cedar pollen. Japanese cedar pollinosis is a type I allergic disease with ocular and nasal symptoms that develop paroxysmally on contact with Japanese cedar pollen. These symptoms, which occur seasonally each year, are typical features of allergic rhinitis, such as sneezing, excessive nasal secretion, nasal congestion, and conjunctival itching.</text>
</comment>
<comment type="similarity">
    <text evidence="28">Belongs to the type I cytokine receptor family. Type 4 subfamily.</text>
</comment>
<gene>
    <name type="primary">IL4R</name>
    <name type="synonym">IL4RA</name>
    <name type="ORF">582J2.1</name>
</gene>
<reference key="1">
    <citation type="journal article" date="1990" name="J. Exp. Med.">
        <title>Human interleukin 4 receptor confers biological responsiveness and defines a novel receptor superfamily.</title>
        <authorList>
            <person name="Idzerda R.L."/>
            <person name="March C.J."/>
            <person name="Mosley B."/>
            <person name="Lyman S.D."/>
            <person name="Bos T.V."/>
            <person name="Gimpel S.D."/>
            <person name="Din W.S."/>
            <person name="Grabstein K.H."/>
            <person name="Widmer M.B."/>
            <person name="Park L.S."/>
            <person name="Cosman D."/>
            <person name="Beckmann M.P."/>
        </authorList>
    </citation>
    <scope>NUCLEOTIDE SEQUENCE [MRNA] (ISOFORM 1)</scope>
    <source>
        <tissue>Peripheral blood</tissue>
    </source>
</reference>
<reference key="2">
    <citation type="journal article" date="1990" name="Int. Immunol.">
        <title>Molecular cloning of a cDNA encoding the human interleukin 4 receptor.</title>
        <authorList>
            <person name="Galizzi J.-P."/>
            <person name="Zuber C.E."/>
            <person name="Harada N."/>
            <person name="Gorman D.M."/>
            <person name="Djossou O."/>
            <person name="Kastelein R."/>
            <person name="Banchereau J."/>
            <person name="Howard M."/>
            <person name="Miyajima A."/>
        </authorList>
    </citation>
    <scope>NUCLEOTIDE SEQUENCE [MRNA] (ISOFORM 1)</scope>
    <source>
        <tissue>Myeloid leukemia cell</tissue>
    </source>
</reference>
<reference key="3">
    <citation type="journal article" date="1999" name="Int. Immunol.">
        <title>Characterization of the membrane-bound and a soluble form of human IL-4 receptor alpha produced by alternative splicing.</title>
        <authorList>
            <person name="Kruse S."/>
            <person name="Forster J."/>
            <person name="Kuehr J."/>
            <person name="Deichmann K.A."/>
        </authorList>
    </citation>
    <scope>NUCLEOTIDE SEQUENCE [GENOMIC DNA]</scope>
    <scope>ALTERNATIVE SPLICING</scope>
    <source>
        <tissue>Blood</tissue>
    </source>
</reference>
<reference key="4">
    <citation type="journal article" date="1999" name="Genomics">
        <title>Genome duplications and other features in 12 Mb of DNA sequence from human chromosome 16p and 16q.</title>
        <authorList>
            <person name="Loftus B.J."/>
            <person name="Kim U.-J."/>
            <person name="Sneddon V.P."/>
            <person name="Kalush F."/>
            <person name="Brandon R."/>
            <person name="Fuhrmann J."/>
            <person name="Mason T."/>
            <person name="Crosby M.L."/>
            <person name="Barnstead M."/>
            <person name="Cronin L."/>
            <person name="Mays A.D."/>
            <person name="Cao Y."/>
            <person name="Xu R.X."/>
            <person name="Kang H.-L."/>
            <person name="Mitchell S."/>
            <person name="Eichler E.E."/>
            <person name="Harris P.C."/>
            <person name="Venter J.C."/>
            <person name="Adams M.D."/>
        </authorList>
    </citation>
    <scope>NUCLEOTIDE SEQUENCE [LARGE SCALE GENOMIC DNA] (ISOFORM 1)</scope>
</reference>
<reference key="5">
    <citation type="submission" date="2001-09" db="EMBL/GenBank/DDBJ databases">
        <authorList>
            <consortium name="SeattleSNPs variation discovery resource"/>
        </authorList>
    </citation>
    <scope>NUCLEOTIDE SEQUENCE [GENOMIC DNA]</scope>
    <scope>VARIANTS VAL-75; ALA-400; ARG-431; LEU-436; PRO-503; ARG-576; ILE-579; SER-675 AND ALA-752</scope>
</reference>
<reference key="6">
    <citation type="journal article" date="2004" name="Nat. Genet.">
        <title>Complete sequencing and characterization of 21,243 full-length human cDNAs.</title>
        <authorList>
            <person name="Ota T."/>
            <person name="Suzuki Y."/>
            <person name="Nishikawa T."/>
            <person name="Otsuki T."/>
            <person name="Sugiyama T."/>
            <person name="Irie R."/>
            <person name="Wakamatsu A."/>
            <person name="Hayashi K."/>
            <person name="Sato H."/>
            <person name="Nagai K."/>
            <person name="Kimura K."/>
            <person name="Makita H."/>
            <person name="Sekine M."/>
            <person name="Obayashi M."/>
            <person name="Nishi T."/>
            <person name="Shibahara T."/>
            <person name="Tanaka T."/>
            <person name="Ishii S."/>
            <person name="Yamamoto J."/>
            <person name="Saito K."/>
            <person name="Kawai Y."/>
            <person name="Isono Y."/>
            <person name="Nakamura Y."/>
            <person name="Nagahari K."/>
            <person name="Murakami K."/>
            <person name="Yasuda T."/>
            <person name="Iwayanagi T."/>
            <person name="Wagatsuma M."/>
            <person name="Shiratori A."/>
            <person name="Sudo H."/>
            <person name="Hosoiri T."/>
            <person name="Kaku Y."/>
            <person name="Kodaira H."/>
            <person name="Kondo H."/>
            <person name="Sugawara M."/>
            <person name="Takahashi M."/>
            <person name="Kanda K."/>
            <person name="Yokoi T."/>
            <person name="Furuya T."/>
            <person name="Kikkawa E."/>
            <person name="Omura Y."/>
            <person name="Abe K."/>
            <person name="Kamihara K."/>
            <person name="Katsuta N."/>
            <person name="Sato K."/>
            <person name="Tanikawa M."/>
            <person name="Yamazaki M."/>
            <person name="Ninomiya K."/>
            <person name="Ishibashi T."/>
            <person name="Yamashita H."/>
            <person name="Murakawa K."/>
            <person name="Fujimori K."/>
            <person name="Tanai H."/>
            <person name="Kimata M."/>
            <person name="Watanabe M."/>
            <person name="Hiraoka S."/>
            <person name="Chiba Y."/>
            <person name="Ishida S."/>
            <person name="Ono Y."/>
            <person name="Takiguchi S."/>
            <person name="Watanabe S."/>
            <person name="Yosida M."/>
            <person name="Hotuta T."/>
            <person name="Kusano J."/>
            <person name="Kanehori K."/>
            <person name="Takahashi-Fujii A."/>
            <person name="Hara H."/>
            <person name="Tanase T.-O."/>
            <person name="Nomura Y."/>
            <person name="Togiya S."/>
            <person name="Komai F."/>
            <person name="Hara R."/>
            <person name="Takeuchi K."/>
            <person name="Arita M."/>
            <person name="Imose N."/>
            <person name="Musashino K."/>
            <person name="Yuuki H."/>
            <person name="Oshima A."/>
            <person name="Sasaki N."/>
            <person name="Aotsuka S."/>
            <person name="Yoshikawa Y."/>
            <person name="Matsunawa H."/>
            <person name="Ichihara T."/>
            <person name="Shiohata N."/>
            <person name="Sano S."/>
            <person name="Moriya S."/>
            <person name="Momiyama H."/>
            <person name="Satoh N."/>
            <person name="Takami S."/>
            <person name="Terashima Y."/>
            <person name="Suzuki O."/>
            <person name="Nakagawa S."/>
            <person name="Senoh A."/>
            <person name="Mizoguchi H."/>
            <person name="Goto Y."/>
            <person name="Shimizu F."/>
            <person name="Wakebe H."/>
            <person name="Hishigaki H."/>
            <person name="Watanabe T."/>
            <person name="Sugiyama A."/>
            <person name="Takemoto M."/>
            <person name="Kawakami B."/>
            <person name="Yamazaki M."/>
            <person name="Watanabe K."/>
            <person name="Kumagai A."/>
            <person name="Itakura S."/>
            <person name="Fukuzumi Y."/>
            <person name="Fujimori Y."/>
            <person name="Komiyama M."/>
            <person name="Tashiro H."/>
            <person name="Tanigami A."/>
            <person name="Fujiwara T."/>
            <person name="Ono T."/>
            <person name="Yamada K."/>
            <person name="Fujii Y."/>
            <person name="Ozaki K."/>
            <person name="Hirao M."/>
            <person name="Ohmori Y."/>
            <person name="Kawabata A."/>
            <person name="Hikiji T."/>
            <person name="Kobatake N."/>
            <person name="Inagaki H."/>
            <person name="Ikema Y."/>
            <person name="Okamoto S."/>
            <person name="Okitani R."/>
            <person name="Kawakami T."/>
            <person name="Noguchi S."/>
            <person name="Itoh T."/>
            <person name="Shigeta K."/>
            <person name="Senba T."/>
            <person name="Matsumura K."/>
            <person name="Nakajima Y."/>
            <person name="Mizuno T."/>
            <person name="Morinaga M."/>
            <person name="Sasaki M."/>
            <person name="Togashi T."/>
            <person name="Oyama M."/>
            <person name="Hata H."/>
            <person name="Watanabe M."/>
            <person name="Komatsu T."/>
            <person name="Mizushima-Sugano J."/>
            <person name="Satoh T."/>
            <person name="Shirai Y."/>
            <person name="Takahashi Y."/>
            <person name="Nakagawa K."/>
            <person name="Okumura K."/>
            <person name="Nagase T."/>
            <person name="Nomura N."/>
            <person name="Kikuchi H."/>
            <person name="Masuho Y."/>
            <person name="Yamashita R."/>
            <person name="Nakai K."/>
            <person name="Yada T."/>
            <person name="Nakamura Y."/>
            <person name="Ohara O."/>
            <person name="Isogai T."/>
            <person name="Sugano S."/>
        </authorList>
    </citation>
    <scope>NUCLEOTIDE SEQUENCE [LARGE SCALE MRNA] (ISOFORM 3)</scope>
    <source>
        <tissue>Thymus</tissue>
    </source>
</reference>
<reference key="7">
    <citation type="journal article" date="2004" name="Nature">
        <title>The sequence and analysis of duplication-rich human chromosome 16.</title>
        <authorList>
            <person name="Martin J."/>
            <person name="Han C."/>
            <person name="Gordon L.A."/>
            <person name="Terry A."/>
            <person name="Prabhakar S."/>
            <person name="She X."/>
            <person name="Xie G."/>
            <person name="Hellsten U."/>
            <person name="Chan Y.M."/>
            <person name="Altherr M."/>
            <person name="Couronne O."/>
            <person name="Aerts A."/>
            <person name="Bajorek E."/>
            <person name="Black S."/>
            <person name="Blumer H."/>
            <person name="Branscomb E."/>
            <person name="Brown N.C."/>
            <person name="Bruno W.J."/>
            <person name="Buckingham J.M."/>
            <person name="Callen D.F."/>
            <person name="Campbell C.S."/>
            <person name="Campbell M.L."/>
            <person name="Campbell E.W."/>
            <person name="Caoile C."/>
            <person name="Challacombe J.F."/>
            <person name="Chasteen L.A."/>
            <person name="Chertkov O."/>
            <person name="Chi H.C."/>
            <person name="Christensen M."/>
            <person name="Clark L.M."/>
            <person name="Cohn J.D."/>
            <person name="Denys M."/>
            <person name="Detter J.C."/>
            <person name="Dickson M."/>
            <person name="Dimitrijevic-Bussod M."/>
            <person name="Escobar J."/>
            <person name="Fawcett J.J."/>
            <person name="Flowers D."/>
            <person name="Fotopulos D."/>
            <person name="Glavina T."/>
            <person name="Gomez M."/>
            <person name="Gonzales E."/>
            <person name="Goodstein D."/>
            <person name="Goodwin L.A."/>
            <person name="Grady D.L."/>
            <person name="Grigoriev I."/>
            <person name="Groza M."/>
            <person name="Hammon N."/>
            <person name="Hawkins T."/>
            <person name="Haydu L."/>
            <person name="Hildebrand C.E."/>
            <person name="Huang W."/>
            <person name="Israni S."/>
            <person name="Jett J."/>
            <person name="Jewett P.B."/>
            <person name="Kadner K."/>
            <person name="Kimball H."/>
            <person name="Kobayashi A."/>
            <person name="Krawczyk M.-C."/>
            <person name="Leyba T."/>
            <person name="Longmire J.L."/>
            <person name="Lopez F."/>
            <person name="Lou Y."/>
            <person name="Lowry S."/>
            <person name="Ludeman T."/>
            <person name="Manohar C.F."/>
            <person name="Mark G.A."/>
            <person name="McMurray K.L."/>
            <person name="Meincke L.J."/>
            <person name="Morgan J."/>
            <person name="Moyzis R.K."/>
            <person name="Mundt M.O."/>
            <person name="Munk A.C."/>
            <person name="Nandkeshwar R.D."/>
            <person name="Pitluck S."/>
            <person name="Pollard M."/>
            <person name="Predki P."/>
            <person name="Parson-Quintana B."/>
            <person name="Ramirez L."/>
            <person name="Rash S."/>
            <person name="Retterer J."/>
            <person name="Ricke D.O."/>
            <person name="Robinson D.L."/>
            <person name="Rodriguez A."/>
            <person name="Salamov A."/>
            <person name="Saunders E.H."/>
            <person name="Scott D."/>
            <person name="Shough T."/>
            <person name="Stallings R.L."/>
            <person name="Stalvey M."/>
            <person name="Sutherland R.D."/>
            <person name="Tapia R."/>
            <person name="Tesmer J.G."/>
            <person name="Thayer N."/>
            <person name="Thompson L.S."/>
            <person name="Tice H."/>
            <person name="Torney D.C."/>
            <person name="Tran-Gyamfi M."/>
            <person name="Tsai M."/>
            <person name="Ulanovsky L.E."/>
            <person name="Ustaszewska A."/>
            <person name="Vo N."/>
            <person name="White P.S."/>
            <person name="Williams A.L."/>
            <person name="Wills P.L."/>
            <person name="Wu J.-R."/>
            <person name="Wu K."/>
            <person name="Yang J."/>
            <person name="DeJong P."/>
            <person name="Bruce D."/>
            <person name="Doggett N.A."/>
            <person name="Deaven L."/>
            <person name="Schmutz J."/>
            <person name="Grimwood J."/>
            <person name="Richardson P."/>
            <person name="Rokhsar D.S."/>
            <person name="Eichler E.E."/>
            <person name="Gilna P."/>
            <person name="Lucas S.M."/>
            <person name="Myers R.M."/>
            <person name="Rubin E.M."/>
            <person name="Pennacchio L.A."/>
        </authorList>
    </citation>
    <scope>NUCLEOTIDE SEQUENCE [LARGE SCALE GENOMIC DNA]</scope>
</reference>
<reference key="8">
    <citation type="journal article" date="2004" name="Genome Res.">
        <title>The status, quality, and expansion of the NIH full-length cDNA project: the Mammalian Gene Collection (MGC).</title>
        <authorList>
            <consortium name="The MGC Project Team"/>
        </authorList>
    </citation>
    <scope>NUCLEOTIDE SEQUENCE [LARGE SCALE MRNA] (ISOFORM 1)</scope>
    <source>
        <tissue>Testis</tissue>
    </source>
</reference>
<reference key="9">
    <citation type="journal article" date="2001" name="Tissue Antigens">
        <title>Identification of a novel single-nucleotide polymorphism (Val554Ile) and definition of eight common alleles for human IL4RA exon 11.</title>
        <authorList>
            <person name="Lozano F."/>
            <person name="Places L."/>
            <person name="Vila J.-M."/>
            <person name="Padilla O."/>
            <person name="Arman M."/>
            <person name="Gimferrer I."/>
            <person name="Suarez B."/>
            <person name="Lopez de la Iglesia A."/>
            <person name="Miserachs N."/>
            <person name="Vives J."/>
        </authorList>
    </citation>
    <scope>NUCLEOTIDE SEQUENCE [GENOMIC DNA] OF 301-825 (ISOFORM 1)</scope>
    <scope>VARIANTS ALA-400; ARG-431; LEU-436; PRO-503; ARG-576 AND ILE-579</scope>
</reference>
<reference key="10">
    <citation type="journal article" date="1994" name="Cell">
        <title>An IL-4 receptor region containing an insulin receptor motif is important for IL-4-mediated IRS-1 phosphorylation and cell growth.</title>
        <authorList>
            <person name="Keegan A.D."/>
            <person name="Nelms K."/>
            <person name="White M."/>
            <person name="Wang L.-M."/>
            <person name="Pierce J.H."/>
            <person name="Paul W.E."/>
        </authorList>
    </citation>
    <scope>FUNCTION IN IRS1 ACTIVATION</scope>
    <scope>PHOSPHORYLATION AT TYR-497</scope>
    <scope>MUTAGENESIS OF TYR-497</scope>
</reference>
<reference key="11">
    <citation type="journal article" date="1995" name="J. Biol. Chem.">
        <title>Activation of JAK3, but not JAK1, is critical to interleukin-4 (IL4) stimulated proliferation and requires a membrane-proximal region of IL4 receptor alpha.</title>
        <authorList>
            <person name="Malabarba M.G."/>
            <person name="Kirken R.A."/>
            <person name="Rui H."/>
            <person name="Koettnitz K."/>
            <person name="Kawamura M."/>
            <person name="O'Shea J.J."/>
            <person name="Kalthoff F.S."/>
            <person name="Farrar W.L."/>
        </authorList>
    </citation>
    <scope>DOMAIN JAK3 ACTIVATION</scope>
</reference>
<reference key="12">
    <citation type="journal article" date="1995" name="J. Biol. Chem.">
        <title>The primary binding subunit of the human interleukin-4 receptor is also a component of the interleukin-13 receptor.</title>
        <authorList>
            <person name="Zurawski S.M."/>
            <person name="Chomarat P."/>
            <person name="Djossou O."/>
            <person name="Bidaud C."/>
            <person name="McKenzie A.N."/>
            <person name="Miossec P."/>
            <person name="Banchereau J."/>
            <person name="Zurawski G."/>
        </authorList>
    </citation>
    <scope>INTERACTION WITH IL13RA1</scope>
</reference>
<reference key="13">
    <citation type="journal article" date="1995" name="Oncogene">
        <title>JAK3 associates with the human interleukin 4 receptor and is tyrosine phosphorylated following receptor triggering.</title>
        <authorList>
            <person name="Rolling C."/>
            <person name="Treton D."/>
            <person name="Beckmann P."/>
            <person name="Galanaud P."/>
            <person name="Richard Y."/>
        </authorList>
    </citation>
    <scope>INTERACTION WITH JAK3</scope>
</reference>
<reference key="14">
    <citation type="journal article" date="1996" name="FEBS Lett.">
        <title>IL4 and IL13 receptors share the gamma c chain and activate STAT6, STAT3 and STAT5 proteins in normal human B cells.</title>
        <authorList>
            <person name="Rolling C."/>
            <person name="Treton D."/>
            <person name="Pellegrini S."/>
            <person name="Galanaud P."/>
            <person name="Richard Y."/>
        </authorList>
    </citation>
    <scope>INTERACTION WITH IL13RA1</scope>
    <scope>PHOSPHORYLATION</scope>
</reference>
<reference key="15">
    <citation type="journal article" date="1996" name="Immunity">
        <title>Growth and gene expression are predominantly controlled by distinct regions of the human IL-4 receptor.</title>
        <authorList>
            <person name="Ryan J.J."/>
            <person name="McReynolds L.J."/>
            <person name="Keegan A."/>
            <person name="Wang L.-H."/>
            <person name="Garfein E."/>
            <person name="Rothman P."/>
            <person name="Nelms K."/>
            <person name="Paul W.E."/>
        </authorList>
    </citation>
    <scope>DOMAIN STAT6 ACTIVATION</scope>
    <scope>MUTAGENESIS OF TYR-575; TYR-603 AND TYR-631</scope>
    <scope>PHOSPHORYLATION AT TYR-575; TYR-603 AND TYR-631</scope>
</reference>
<reference key="16">
    <citation type="journal article" date="1999" name="Int. Arch. Allergy Immunol.">
        <title>Soluble human interleukin-4 receptor is produced by activated T cells under the control of metalloproteinases.</title>
        <authorList>
            <person name="Jung T."/>
            <person name="Schrader N."/>
            <person name="Hellwig M."/>
            <person name="Enssle K.H."/>
            <person name="Neumann C."/>
        </authorList>
    </citation>
    <scope>PROTEOLYTIC PROCESSING</scope>
</reference>
<reference key="17">
    <citation type="journal article" date="2001" name="J. Immunol.">
        <title>Immunoreceptor tyrosine-based inhibitory motif of the IL-4 receptor associates with SH2-containing phosphatases and regulates IL-4-induced proliferation.</title>
        <authorList>
            <person name="Kashiwada M."/>
            <person name="Giallourakis C.C."/>
            <person name="Pan P.-Y."/>
            <person name="Rothman P.B."/>
        </authorList>
    </citation>
    <scope>INTERACTION WITH PTPN6; PTPN11 AND INPP5D</scope>
    <scope>STAT6 ACTIVATION</scope>
    <scope>MUTAGENESIS OF TYR-713</scope>
</reference>
<reference key="18">
    <citation type="journal article" date="2002" name="J. Mol. Biol.">
        <title>The high-affinity interaction of human IL-4 and the receptor alpha chain is constituted by two independent binding clusters.</title>
        <authorList>
            <person name="Zhang J.-L."/>
            <person name="Simeonowa I."/>
            <person name="Wang Y."/>
            <person name="Sebald W."/>
        </authorList>
    </citation>
    <scope>LIGAND-BINDING SITES</scope>
    <scope>MUTAGENESIS OF TYR-38; MET-39; SER-40; LEU-64; PHE-66; LEU-67; LEU-68; ASP-91; ASP-92; VAL-93; VAL-94; SER-95; ASP-97; ASN-98; TYR-99; LYS-116; PRO-117; SER-118; GLU-119; ASP-150; ASN-151; TYR-152; LEU-153; TYR-154 AND TYR-208</scope>
</reference>
<reference key="19">
    <citation type="journal article" date="2003" name="J. Biol. Chem.">
        <title>Regulation of the dephosphorylation of Stat6. Participation of Tyr-713 in the interleukin-4 receptor alpha, the tyrosine phosphatase SHP-1, and the proteasome.</title>
        <authorList>
            <person name="Hanson E.M."/>
            <person name="Dickensheets H."/>
            <person name="Qu C.K."/>
            <person name="Donnelly R.P."/>
            <person name="Keegan A.D."/>
        </authorList>
    </citation>
    <scope>STAT6 ACTIVATION</scope>
    <scope>INHIBITION BY TYROSINE PHOSPHATASE SHP1</scope>
</reference>
<reference key="20">
    <citation type="journal article" date="1999" name="Cell">
        <title>Crystal structure of the interleukin-4/receptor alpha chain complex reveals a mosaic binding interface.</title>
        <authorList>
            <person name="Hage T."/>
            <person name="Sebald W."/>
            <person name="Reinemer P."/>
        </authorList>
    </citation>
    <scope>X-RAY CRYSTALLOGRAPHY (2.3 ANGSTROMS) OF 26-232 IN COMPLEX WITH IL4</scope>
</reference>
<reference key="21">
    <citation type="journal article" date="1997" name="Biochem. Biophys. Res. Commun.">
        <title>Common polymorphisms in the coding part of the IL4-receptor gene.</title>
        <authorList>
            <person name="Deichmann K."/>
            <person name="Bardutzky J."/>
            <person name="Forster J."/>
            <person name="Heinzmann A."/>
            <person name="Kuehr J."/>
        </authorList>
    </citation>
    <scope>VARIANTS VAL-75; ALA-400; ARG-431; LEU-436 AND PRO-786</scope>
</reference>
<reference key="22">
    <citation type="journal article" date="1997" name="N. Engl. J. Med.">
        <title>The association of atopy with a gain-of-function mutation in the alpha subunit of the interleukin-4 receptor.</title>
        <authorList>
            <person name="Hershey G.K.K."/>
            <person name="Friedrich M.F."/>
            <person name="Esswein L.A."/>
            <person name="Thomas M.L."/>
            <person name="Chatila T.A."/>
        </authorList>
    </citation>
    <scope>VARIANT ARG-576</scope>
</reference>
<reference key="23">
    <citation type="journal article" date="1998" name="Nat. Genet.">
        <title>Ile50Val variant of IL4R alpha upregulates IgE synthesis and associates with atopic asthma.</title>
        <authorList>
            <person name="Mitsuyasu H."/>
            <person name="Izuhara K."/>
            <person name="Mao X.-Q."/>
            <person name="Gao P.S."/>
            <person name="Arinobu Y."/>
            <person name="Enomoto T."/>
            <person name="Kawai M."/>
            <person name="Sasaki S."/>
            <person name="Dake Y."/>
            <person name="Hamasaki N."/>
            <person name="Shirakawa T."/>
            <person name="Hopkin J.M."/>
        </authorList>
    </citation>
    <scope>VARIANT VAL-75</scope>
</reference>
<reference key="24">
    <citation type="journal article" date="1999" name="Am. J. Respir. Crit. Care Med.">
        <title>No association between atopy/asthma and the Ile50Val polymorphism of IL-4 receptor.</title>
        <authorList>
            <person name="Noguchi E."/>
            <person name="Shibasaki M."/>
            <person name="Arinami T."/>
            <person name="Takeda K."/>
            <person name="Yokouchi Y."/>
            <person name="Kobayashi K."/>
            <person name="Imoto N."/>
            <person name="Nakahara S."/>
            <person name="Matsui A."/>
            <person name="Hamaguchi H."/>
        </authorList>
    </citation>
    <scope>VARIANT VAL-75</scope>
</reference>
<reference key="25">
    <citation type="journal article" date="1999" name="Immunology">
        <title>The polymorphisms S503P and Q576R in the interleukin-4 receptor alpha gene are associated with atopy and influence the signal transduction.</title>
        <authorList>
            <person name="Kruse S."/>
            <person name="Japha T."/>
            <person name="Tedner M."/>
            <person name="Sparholt S.H."/>
            <person name="Forster J."/>
            <person name="Kuehr J."/>
            <person name="Deichmann K.A."/>
        </authorList>
    </citation>
    <scope>VARIANTS PRO-503 AND ARG-576</scope>
</reference>
<reference key="26">
    <citation type="journal article" date="1999" name="J. Immunol.">
        <title>Effects of an allergy-associated mutation in the human IL-4R alpha (Q576R) on human IL-4-induced signal transduction.</title>
        <authorList>
            <person name="Wang H.Y."/>
            <person name="Shelburne C.P."/>
            <person name="Zamorano J."/>
            <person name="Kelly A.E."/>
            <person name="Ryan J.J."/>
            <person name="Keegan A.D."/>
        </authorList>
    </citation>
    <scope>CHARACTERIZATION OF VARIANT ARG-576</scope>
    <scope>MUTAGENESIS OF TYR-575</scope>
</reference>
<reference key="27">
    <citation type="journal article" date="2006" name="J. Allergy Clin. Immunol.">
        <title>IL-13 receptor alpha 2: a regulator of IL-13 and IL-4 signal transduction in primary human fibroblasts.</title>
        <authorList>
            <person name="Andrews A.L."/>
            <person name="Nasir T."/>
            <person name="Bucchieri F."/>
            <person name="Holloway J.W."/>
            <person name="Holgate S.T."/>
            <person name="Davies D.E."/>
        </authorList>
    </citation>
    <scope>FUNCTION</scope>
    <scope>INTERACTION WITH IL13RA2</scope>
</reference>
<reference key="28">
    <citation type="journal article" date="2000" name="Am. J. Hum. Genet.">
        <title>Variation in the interleukin 4-receptor alpha gene confers susceptibility to asthma and atopy in ethnically diverse populations.</title>
        <authorList>
            <person name="Ober C."/>
            <person name="Leavitt S.A."/>
            <person name="Tsalenko A."/>
            <person name="Howard T.D."/>
            <person name="Hoki D.M."/>
            <person name="Daniel R."/>
            <person name="Newman D.L."/>
            <person name="Wu X."/>
            <person name="Parry R."/>
            <person name="Lester L.A."/>
            <person name="Solway J."/>
            <person name="Blumenthal M."/>
            <person name="King R.A."/>
            <person name="Xu J."/>
            <person name="Meyers D.A."/>
            <person name="Bleecker E.R."/>
            <person name="Cox N.J."/>
        </authorList>
    </citation>
    <scope>VARIANT ALA-752</scope>
</reference>
<reference key="29">
    <citation type="journal article" date="2000" name="Br. J. Dermatol.">
        <title>Interleukin 4 receptor alpha chain polymorphism Gln551Arg is associated with adult atopic dermatitis in Japan.</title>
        <authorList>
            <person name="Oiso N."/>
            <person name="Fukai K."/>
            <person name="Ishii M."/>
        </authorList>
    </citation>
    <scope>VARIANT ARG-576</scope>
</reference>
<reference key="30">
    <citation type="journal article" date="2001" name="Clin. Immunol.">
        <title>Analysis of the Ser786Pro interleukin-4 receptor alpha allelic variant in allergic and nonallergic asthma and its functional consequences.</title>
        <authorList>
            <person name="Andrews R.P."/>
            <person name="Burrell L."/>
            <person name="Rosa-Rosa L."/>
            <person name="Cunningham C.M."/>
            <person name="Brzezinski J.L."/>
            <person name="Bernstein J.A."/>
            <person name="Khurana Hershey G.K."/>
        </authorList>
    </citation>
    <scope>VARIANT PRO-786</scope>
</reference>
<reference key="31">
    <citation type="journal article" date="2003" name="J. Allergy Clin. Immunol.">
        <title>High contribution contrast between the genes of eosinophil peroxidase and IL-4 receptor alpha-chain in Japanese cedar pollinosis.</title>
        <authorList>
            <person name="Nakamura H."/>
            <person name="Miyagawa K."/>
            <person name="Ogino K."/>
            <person name="Endo T."/>
            <person name="Imai T."/>
            <person name="Ozasa K."/>
            <person name="Motohashi Y."/>
            <person name="Matsuzaki I."/>
            <person name="Sasahara S."/>
            <person name="Hatta K."/>
            <person name="Eboshida A."/>
        </authorList>
    </citation>
    <scope>VARIANTS VAL-75 AND ALA-400</scope>
    <scope>POLYMORPHISM</scope>
</reference>
<accession>P24394</accession>
<accession>B4E076</accession>
<accession>B9EKU8</accession>
<accession>H3BSY5</accession>
<accession>Q96P01</accession>
<accession>Q9H181</accession>
<accession>Q9H182</accession>
<accession>Q9H183</accession>
<accession>Q9H184</accession>
<accession>Q9H185</accession>
<accession>Q9H186</accession>
<accession>Q9H187</accession>
<accession>Q9H188</accession>
<dbReference type="EMBL" id="X52425">
    <property type="protein sequence ID" value="CAA36672.1"/>
    <property type="molecule type" value="mRNA"/>
</dbReference>
<dbReference type="EMBL" id="AC004525">
    <property type="protein sequence ID" value="AAC23495.1"/>
    <property type="molecule type" value="Genomic_DNA"/>
</dbReference>
<dbReference type="EMBL" id="AF421855">
    <property type="protein sequence ID" value="AAL12163.1"/>
    <property type="molecule type" value="Genomic_DNA"/>
</dbReference>
<dbReference type="EMBL" id="AJ293647">
    <property type="protein sequence ID" value="CAC20445.1"/>
    <property type="molecule type" value="Genomic_DNA"/>
</dbReference>
<dbReference type="EMBL" id="AJ293648">
    <property type="protein sequence ID" value="CAC20446.1"/>
    <property type="molecule type" value="Genomic_DNA"/>
</dbReference>
<dbReference type="EMBL" id="AJ293649">
    <property type="protein sequence ID" value="CAC20447.1"/>
    <property type="molecule type" value="Genomic_DNA"/>
</dbReference>
<dbReference type="EMBL" id="AJ293650">
    <property type="protein sequence ID" value="CAC20448.1"/>
    <property type="molecule type" value="Genomic_DNA"/>
</dbReference>
<dbReference type="EMBL" id="AJ293651">
    <property type="protein sequence ID" value="CAC20449.1"/>
    <property type="molecule type" value="Genomic_DNA"/>
</dbReference>
<dbReference type="EMBL" id="AJ293652">
    <property type="protein sequence ID" value="CAC20450.1"/>
    <property type="molecule type" value="Genomic_DNA"/>
</dbReference>
<dbReference type="EMBL" id="AJ293653">
    <property type="protein sequence ID" value="CAC20451.1"/>
    <property type="molecule type" value="Genomic_DNA"/>
</dbReference>
<dbReference type="EMBL" id="AK303255">
    <property type="protein sequence ID" value="BAG64338.1"/>
    <property type="molecule type" value="mRNA"/>
</dbReference>
<dbReference type="EMBL" id="AC106739">
    <property type="status" value="NOT_ANNOTATED_CDS"/>
    <property type="molecule type" value="Genomic_DNA"/>
</dbReference>
<dbReference type="EMBL" id="BC151131">
    <property type="protein sequence ID" value="AAI51132.1"/>
    <property type="molecule type" value="mRNA"/>
</dbReference>
<dbReference type="EMBL" id="AJ293654">
    <property type="protein sequence ID" value="CAC20452.1"/>
    <property type="molecule type" value="Genomic_DNA"/>
</dbReference>
<dbReference type="CCDS" id="CCDS10629.1">
    <molecule id="P24394-1"/>
</dbReference>
<dbReference type="CCDS" id="CCDS58441.1">
    <molecule id="P24394-3"/>
</dbReference>
<dbReference type="PIR" id="A60386">
    <property type="entry name" value="A60386"/>
</dbReference>
<dbReference type="RefSeq" id="NP_000409.1">
    <molecule id="P24394-1"/>
    <property type="nucleotide sequence ID" value="NM_000418.4"/>
</dbReference>
<dbReference type="RefSeq" id="NP_001244335.1">
    <molecule id="P24394-1"/>
    <property type="nucleotide sequence ID" value="NM_001257406.2"/>
</dbReference>
<dbReference type="RefSeq" id="NP_001244336.1">
    <molecule id="P24394-3"/>
    <property type="nucleotide sequence ID" value="NM_001257407.2"/>
</dbReference>
<dbReference type="RefSeq" id="XP_011544127.1">
    <molecule id="P24394-1"/>
    <property type="nucleotide sequence ID" value="XM_011545825.2"/>
</dbReference>
<dbReference type="RefSeq" id="XP_011544128.1">
    <molecule id="P24394-1"/>
    <property type="nucleotide sequence ID" value="XM_011545826.3"/>
</dbReference>
<dbReference type="RefSeq" id="XP_011544129.1">
    <molecule id="P24394-1"/>
    <property type="nucleotide sequence ID" value="XM_011545827.3"/>
</dbReference>
<dbReference type="RefSeq" id="XP_047290023.1">
    <molecule id="P24394-1"/>
    <property type="nucleotide sequence ID" value="XM_047434067.1"/>
</dbReference>
<dbReference type="RefSeq" id="XP_054236217.1">
    <molecule id="P24394-1"/>
    <property type="nucleotide sequence ID" value="XM_054380242.1"/>
</dbReference>
<dbReference type="RefSeq" id="XP_054236218.1">
    <molecule id="P24394-1"/>
    <property type="nucleotide sequence ID" value="XM_054380243.1"/>
</dbReference>
<dbReference type="PDB" id="1IAR">
    <property type="method" value="X-ray"/>
    <property type="resolution" value="2.30 A"/>
    <property type="chains" value="B=26-232"/>
</dbReference>
<dbReference type="PDB" id="1IRS">
    <property type="method" value="NMR"/>
    <property type="chains" value="B=489-499"/>
</dbReference>
<dbReference type="PDB" id="3BPL">
    <property type="method" value="X-ray"/>
    <property type="resolution" value="2.93 A"/>
    <property type="chains" value="B=27-227"/>
</dbReference>
<dbReference type="PDB" id="3BPN">
    <property type="method" value="X-ray"/>
    <property type="resolution" value="3.02 A"/>
    <property type="chains" value="B=27-227"/>
</dbReference>
<dbReference type="PDB" id="3BPO">
    <property type="method" value="X-ray"/>
    <property type="resolution" value="3.00 A"/>
    <property type="chains" value="B=27-227"/>
</dbReference>
<dbReference type="PDB" id="5E4E">
    <property type="method" value="X-ray"/>
    <property type="resolution" value="3.00 A"/>
    <property type="chains" value="B=26-228"/>
</dbReference>
<dbReference type="PDB" id="6OEL">
    <property type="method" value="X-ray"/>
    <property type="resolution" value="3.10 A"/>
    <property type="chains" value="B=27-224"/>
</dbReference>
<dbReference type="PDB" id="6WGL">
    <property type="method" value="X-ray"/>
    <property type="resolution" value="2.82 A"/>
    <property type="chains" value="C=26-232"/>
</dbReference>
<dbReference type="PDB" id="8K4Q">
    <property type="method" value="X-ray"/>
    <property type="resolution" value="2.59 A"/>
    <property type="chains" value="A/C=26-232"/>
</dbReference>
<dbReference type="PDBsum" id="1IAR"/>
<dbReference type="PDBsum" id="1IRS"/>
<dbReference type="PDBsum" id="3BPL"/>
<dbReference type="PDBsum" id="3BPN"/>
<dbReference type="PDBsum" id="3BPO"/>
<dbReference type="PDBsum" id="5E4E"/>
<dbReference type="PDBsum" id="6OEL"/>
<dbReference type="PDBsum" id="6WGL"/>
<dbReference type="PDBsum" id="8K4Q"/>
<dbReference type="SMR" id="P24394"/>
<dbReference type="BioGRID" id="109780">
    <property type="interactions" value="55"/>
</dbReference>
<dbReference type="ComplexPortal" id="CPX-624">
    <property type="entry name" value="Interleukin-4 receptor-ligand type-2 complex"/>
</dbReference>
<dbReference type="ComplexPortal" id="CPX-844">
    <property type="entry name" value="Interleukin-13 receptor-ligand alpha 1 complex"/>
</dbReference>
<dbReference type="ComplexPortal" id="CPX-8834">
    <property type="entry name" value="Interleukin-4 receptor-ligand type-1 complex"/>
</dbReference>
<dbReference type="CORUM" id="P24394"/>
<dbReference type="DIP" id="DIP-3223N"/>
<dbReference type="ELM" id="P24394"/>
<dbReference type="FunCoup" id="P24394">
    <property type="interactions" value="807"/>
</dbReference>
<dbReference type="IntAct" id="P24394">
    <property type="interactions" value="35"/>
</dbReference>
<dbReference type="MINT" id="P24394"/>
<dbReference type="STRING" id="9606.ENSP00000379111"/>
<dbReference type="ChEMBL" id="CHEMBL3580490"/>
<dbReference type="DrugBank" id="DB05078">
    <property type="generic name" value="AER001"/>
</dbReference>
<dbReference type="DrugBank" id="DB12159">
    <property type="generic name" value="Dupilumab"/>
</dbReference>
<dbReference type="DrugCentral" id="P24394"/>
<dbReference type="GuidetoPHARMACOLOGY" id="1697"/>
<dbReference type="TCDB" id="8.A.152.1.9">
    <property type="family name" value="the interleukin receptor (ilr) family"/>
</dbReference>
<dbReference type="GlyConnect" id="2053">
    <property type="glycosylation" value="1 N-Linked glycan (1 site)"/>
</dbReference>
<dbReference type="GlyCosmos" id="P24394">
    <property type="glycosylation" value="6 sites, 2 glycans"/>
</dbReference>
<dbReference type="GlyGen" id="P24394">
    <property type="glycosylation" value="7 sites, 4 N-linked glycans (2 sites)"/>
</dbReference>
<dbReference type="iPTMnet" id="P24394"/>
<dbReference type="PhosphoSitePlus" id="P24394"/>
<dbReference type="BioMuta" id="IL4R"/>
<dbReference type="DMDM" id="124335"/>
<dbReference type="jPOST" id="P24394"/>
<dbReference type="MassIVE" id="P24394"/>
<dbReference type="PaxDb" id="9606-ENSP00000379111"/>
<dbReference type="PeptideAtlas" id="P24394"/>
<dbReference type="ProteomicsDB" id="54203">
    <molecule id="P24394-1"/>
</dbReference>
<dbReference type="ProteomicsDB" id="54204">
    <molecule id="P24394-2"/>
</dbReference>
<dbReference type="ProteomicsDB" id="5656"/>
<dbReference type="ABCD" id="P24394">
    <property type="antibodies" value="48 sequenced antibodies"/>
</dbReference>
<dbReference type="Antibodypedia" id="3843">
    <property type="antibodies" value="771 antibodies from 41 providers"/>
</dbReference>
<dbReference type="DNASU" id="3566"/>
<dbReference type="Ensembl" id="ENST00000170630.6">
    <molecule id="P24394-3"/>
    <property type="protein sequence ID" value="ENSP00000170630.3"/>
    <property type="gene ID" value="ENSG00000077238.14"/>
</dbReference>
<dbReference type="Ensembl" id="ENST00000395762.7">
    <molecule id="P24394-1"/>
    <property type="protein sequence ID" value="ENSP00000379111.2"/>
    <property type="gene ID" value="ENSG00000077238.14"/>
</dbReference>
<dbReference type="Ensembl" id="ENST00000543915.6">
    <molecule id="P24394-1"/>
    <property type="protein sequence ID" value="ENSP00000441667.2"/>
    <property type="gene ID" value="ENSG00000077238.14"/>
</dbReference>
<dbReference type="GeneID" id="3566"/>
<dbReference type="KEGG" id="hsa:3566"/>
<dbReference type="MANE-Select" id="ENST00000395762.7">
    <property type="protein sequence ID" value="ENSP00000379111.2"/>
    <property type="RefSeq nucleotide sequence ID" value="NM_000418.4"/>
    <property type="RefSeq protein sequence ID" value="NP_000409.1"/>
</dbReference>
<dbReference type="UCSC" id="uc002don.5">
    <molecule id="P24394-1"/>
    <property type="organism name" value="human"/>
</dbReference>
<dbReference type="AGR" id="HGNC:6015"/>
<dbReference type="CTD" id="3566"/>
<dbReference type="DisGeNET" id="3566"/>
<dbReference type="GeneCards" id="IL4R"/>
<dbReference type="HGNC" id="HGNC:6015">
    <property type="gene designation" value="IL4R"/>
</dbReference>
<dbReference type="HPA" id="ENSG00000077238">
    <property type="expression patterns" value="Low tissue specificity"/>
</dbReference>
<dbReference type="MalaCards" id="IL4R"/>
<dbReference type="MIM" id="147781">
    <property type="type" value="gene"/>
</dbReference>
<dbReference type="neXtProt" id="NX_P24394"/>
<dbReference type="OpenTargets" id="ENSG00000077238"/>
<dbReference type="PharmGKB" id="PA29832"/>
<dbReference type="VEuPathDB" id="HostDB:ENSG00000077238"/>
<dbReference type="eggNOG" id="ENOG502S3Y8">
    <property type="taxonomic scope" value="Eukaryota"/>
</dbReference>
<dbReference type="GeneTree" id="ENSGT00510000049182"/>
<dbReference type="HOGENOM" id="CLU_020561_0_0_1"/>
<dbReference type="InParanoid" id="P24394"/>
<dbReference type="OMA" id="AVCVCHM"/>
<dbReference type="OrthoDB" id="8962741at2759"/>
<dbReference type="PAN-GO" id="P24394">
    <property type="GO annotations" value="4 GO annotations based on evolutionary models"/>
</dbReference>
<dbReference type="PhylomeDB" id="P24394"/>
<dbReference type="TreeFam" id="TF337996"/>
<dbReference type="PathwayCommons" id="P24394"/>
<dbReference type="Reactome" id="R-HSA-6785807">
    <property type="pathway name" value="Interleukin-4 and Interleukin-13 signaling"/>
</dbReference>
<dbReference type="SignaLink" id="P24394"/>
<dbReference type="SIGNOR" id="P24394"/>
<dbReference type="BioGRID-ORCS" id="3566">
    <property type="hits" value="9 hits in 1151 CRISPR screens"/>
</dbReference>
<dbReference type="ChiTaRS" id="IL4R">
    <property type="organism name" value="human"/>
</dbReference>
<dbReference type="EvolutionaryTrace" id="P24394"/>
<dbReference type="GeneWiki" id="Interleukin-4_receptor"/>
<dbReference type="GenomeRNAi" id="3566"/>
<dbReference type="Pharos" id="P24394">
    <property type="development level" value="Tclin"/>
</dbReference>
<dbReference type="PRO" id="PR:P24394"/>
<dbReference type="Proteomes" id="UP000005640">
    <property type="component" value="Chromosome 16"/>
</dbReference>
<dbReference type="RNAct" id="P24394">
    <property type="molecule type" value="protein"/>
</dbReference>
<dbReference type="Bgee" id="ENSG00000077238">
    <property type="expression patterns" value="Expressed in granulocyte and 159 other cell types or tissues"/>
</dbReference>
<dbReference type="ExpressionAtlas" id="P24394">
    <property type="expression patterns" value="baseline and differential"/>
</dbReference>
<dbReference type="GO" id="GO:0034451">
    <property type="term" value="C:centriolar satellite"/>
    <property type="evidence" value="ECO:0000314"/>
    <property type="project" value="HPA"/>
</dbReference>
<dbReference type="GO" id="GO:0009897">
    <property type="term" value="C:external side of plasma membrane"/>
    <property type="evidence" value="ECO:0000318"/>
    <property type="project" value="GO_Central"/>
</dbReference>
<dbReference type="GO" id="GO:0005576">
    <property type="term" value="C:extracellular region"/>
    <property type="evidence" value="ECO:0007669"/>
    <property type="project" value="UniProtKB-SubCell"/>
</dbReference>
<dbReference type="GO" id="GO:0005654">
    <property type="term" value="C:nucleoplasm"/>
    <property type="evidence" value="ECO:0000314"/>
    <property type="project" value="HPA"/>
</dbReference>
<dbReference type="GO" id="GO:0005886">
    <property type="term" value="C:plasma membrane"/>
    <property type="evidence" value="ECO:0000314"/>
    <property type="project" value="HPA"/>
</dbReference>
<dbReference type="GO" id="GO:0043235">
    <property type="term" value="C:receptor complex"/>
    <property type="evidence" value="ECO:0000314"/>
    <property type="project" value="MGI"/>
</dbReference>
<dbReference type="GO" id="GO:0004896">
    <property type="term" value="F:cytokine receptor activity"/>
    <property type="evidence" value="ECO:0000318"/>
    <property type="project" value="GO_Central"/>
</dbReference>
<dbReference type="GO" id="GO:0004913">
    <property type="term" value="F:interleukin-4 receptor activity"/>
    <property type="evidence" value="ECO:0000314"/>
    <property type="project" value="UniProt"/>
</dbReference>
<dbReference type="GO" id="GO:0019221">
    <property type="term" value="P:cytokine-mediated signaling pathway"/>
    <property type="evidence" value="ECO:0000318"/>
    <property type="project" value="GO_Central"/>
</dbReference>
<dbReference type="GO" id="GO:0042832">
    <property type="term" value="P:defense response to protozoan"/>
    <property type="evidence" value="ECO:0007669"/>
    <property type="project" value="Ensembl"/>
</dbReference>
<dbReference type="GO" id="GO:0006955">
    <property type="term" value="P:immune response"/>
    <property type="evidence" value="ECO:0000304"/>
    <property type="project" value="ProtInc"/>
</dbReference>
<dbReference type="GO" id="GO:0016064">
    <property type="term" value="P:immunoglobulin mediated immune response"/>
    <property type="evidence" value="ECO:0007669"/>
    <property type="project" value="Ensembl"/>
</dbReference>
<dbReference type="GO" id="GO:0035771">
    <property type="term" value="P:interleukin-4-mediated signaling pathway"/>
    <property type="evidence" value="ECO:0000314"/>
    <property type="project" value="UniProt"/>
</dbReference>
<dbReference type="GO" id="GO:0045626">
    <property type="term" value="P:negative regulation of T-helper 1 cell differentiation"/>
    <property type="evidence" value="ECO:0007669"/>
    <property type="project" value="Ensembl"/>
</dbReference>
<dbReference type="GO" id="GO:0032722">
    <property type="term" value="P:positive regulation of chemokine production"/>
    <property type="evidence" value="ECO:0007669"/>
    <property type="project" value="Ensembl"/>
</dbReference>
<dbReference type="GO" id="GO:0120162">
    <property type="term" value="P:positive regulation of cold-induced thermogenesis"/>
    <property type="evidence" value="ECO:0000250"/>
    <property type="project" value="YuBioLab"/>
</dbReference>
<dbReference type="GO" id="GO:0002639">
    <property type="term" value="P:positive regulation of immunoglobulin production"/>
    <property type="evidence" value="ECO:0007669"/>
    <property type="project" value="Ensembl"/>
</dbReference>
<dbReference type="GO" id="GO:0043032">
    <property type="term" value="P:positive regulation of macrophage activation"/>
    <property type="evidence" value="ECO:0007669"/>
    <property type="project" value="Ensembl"/>
</dbReference>
<dbReference type="GO" id="GO:0043306">
    <property type="term" value="P:positive regulation of mast cell degranulation"/>
    <property type="evidence" value="ECO:0007669"/>
    <property type="project" value="Ensembl"/>
</dbReference>
<dbReference type="GO" id="GO:1901741">
    <property type="term" value="P:positive regulation of myoblast fusion"/>
    <property type="evidence" value="ECO:0007669"/>
    <property type="project" value="Ensembl"/>
</dbReference>
<dbReference type="GO" id="GO:0045630">
    <property type="term" value="P:positive regulation of T-helper 2 cell differentiation"/>
    <property type="evidence" value="ECO:0007669"/>
    <property type="project" value="Ensembl"/>
</dbReference>
<dbReference type="GO" id="GO:0002532">
    <property type="term" value="P:production of molecular mediator involved in inflammatory response"/>
    <property type="evidence" value="ECO:0007669"/>
    <property type="project" value="InterPro"/>
</dbReference>
<dbReference type="GO" id="GO:0007165">
    <property type="term" value="P:signal transduction"/>
    <property type="evidence" value="ECO:0000304"/>
    <property type="project" value="ProtInc"/>
</dbReference>
<dbReference type="GO" id="GO:0045063">
    <property type="term" value="P:T-helper 1 cell differentiation"/>
    <property type="evidence" value="ECO:0007669"/>
    <property type="project" value="Ensembl"/>
</dbReference>
<dbReference type="GO" id="GO:0045064">
    <property type="term" value="P:T-helper 2 cell differentiation"/>
    <property type="evidence" value="ECO:0007669"/>
    <property type="project" value="Ensembl"/>
</dbReference>
<dbReference type="CDD" id="cd00063">
    <property type="entry name" value="FN3"/>
    <property type="match status" value="1"/>
</dbReference>
<dbReference type="FunFam" id="2.60.40.10:FF:001490">
    <property type="entry name" value="Interleukin-4 receptor subunit alpha"/>
    <property type="match status" value="1"/>
</dbReference>
<dbReference type="FunFam" id="2.60.40.10:FF:001573">
    <property type="entry name" value="Interleukin-4 receptor subunit alpha"/>
    <property type="match status" value="1"/>
</dbReference>
<dbReference type="Gene3D" id="2.60.40.10">
    <property type="entry name" value="Immunoglobulins"/>
    <property type="match status" value="2"/>
</dbReference>
<dbReference type="IDEAL" id="IID00653"/>
<dbReference type="InterPro" id="IPR003961">
    <property type="entry name" value="FN3_dom"/>
</dbReference>
<dbReference type="InterPro" id="IPR036116">
    <property type="entry name" value="FN3_sf"/>
</dbReference>
<dbReference type="InterPro" id="IPR003531">
    <property type="entry name" value="Hempt_rcpt_S_F1_CS"/>
</dbReference>
<dbReference type="InterPro" id="IPR013783">
    <property type="entry name" value="Ig-like_fold"/>
</dbReference>
<dbReference type="InterPro" id="IPR015319">
    <property type="entry name" value="IL-4_rcpt-alpha_N"/>
</dbReference>
<dbReference type="PANTHER" id="PTHR23037">
    <property type="entry name" value="CYTOKINE RECEPTOR"/>
    <property type="match status" value="1"/>
</dbReference>
<dbReference type="PANTHER" id="PTHR23037:SF32">
    <property type="entry name" value="INTERLEUKIN-4 RECEPTOR SUBUNIT ALPHA"/>
    <property type="match status" value="1"/>
</dbReference>
<dbReference type="Pfam" id="PF09238">
    <property type="entry name" value="IL4Ra_N"/>
    <property type="match status" value="1"/>
</dbReference>
<dbReference type="SUPFAM" id="SSF49265">
    <property type="entry name" value="Fibronectin type III"/>
    <property type="match status" value="2"/>
</dbReference>
<dbReference type="PROSITE" id="PS50853">
    <property type="entry name" value="FN3"/>
    <property type="match status" value="1"/>
</dbReference>
<dbReference type="PROSITE" id="PS01355">
    <property type="entry name" value="HEMATOPO_REC_S_F1"/>
    <property type="match status" value="1"/>
</dbReference>
<name>IL4RA_HUMAN</name>
<proteinExistence type="evidence at protein level"/>
<protein>
    <recommendedName>
        <fullName>Interleukin-4 receptor subunit alpha</fullName>
        <shortName>IL-4 receptor subunit alpha</shortName>
        <shortName>IL-4R subunit alpha</shortName>
        <shortName>IL-4R-alpha</shortName>
        <shortName>IL-4RA</shortName>
    </recommendedName>
    <cdAntigenName>CD124</cdAntigenName>
    <component>
        <recommendedName>
            <fullName>Soluble interleukin-4 receptor subunit alpha</fullName>
            <shortName>Soluble IL-4 receptor subunit alpha</shortName>
            <shortName>Soluble IL-4R-alpha</shortName>
            <shortName>sIL4Ralpha/prot</shortName>
        </recommendedName>
        <alternativeName>
            <fullName>IL-4-binding protein</fullName>
            <shortName>IL4-BP</shortName>
        </alternativeName>
    </component>
</protein>
<organism>
    <name type="scientific">Homo sapiens</name>
    <name type="common">Human</name>
    <dbReference type="NCBI Taxonomy" id="9606"/>
    <lineage>
        <taxon>Eukaryota</taxon>
        <taxon>Metazoa</taxon>
        <taxon>Chordata</taxon>
        <taxon>Craniata</taxon>
        <taxon>Vertebrata</taxon>
        <taxon>Euteleostomi</taxon>
        <taxon>Mammalia</taxon>
        <taxon>Eutheria</taxon>
        <taxon>Euarchontoglires</taxon>
        <taxon>Primates</taxon>
        <taxon>Haplorrhini</taxon>
        <taxon>Catarrhini</taxon>
        <taxon>Hominidae</taxon>
        <taxon>Homo</taxon>
    </lineage>
</organism>
<sequence>MGWLCSGLLFPVSCLVLLQVASSGNMKVLQEPTCVSDYMSISTCEWKMNGPTNCSTELRLLYQLVFLLSEAHTCIPENNGGAGCVCHLLMDDVVSADNYTLDLWAGQQLLWKGSFKPSEHVKPRAPGNLTVHTNVSDTLLLTWSNPYPPDNYLYNHLTYAVNIWSENDPADFRIYNVTYLEPSLRIAASTLKSGISYRARVRAWAQCYNTTWSEWSPSTKWHNSYREPFEQHLLLGVSVSCIVILAVCLLCYVSITKIKKEWWDQIPNPARSRLVAIIIQDAQGSQWEKRSRGQEPAKCPHWKNCLTKLLPCFLEHNMKRDEDPHKAAKEMPFQGSGKSAWCPVEISKTVLWPESISVVRCVELFEAPVECEEEEEVEEEKGSFCASPESSRDDFQEGREGIVARLTESLFLDLLGEENGGFCQQDMGESCLLPPSGSTSAHMPWDEFPSAGPKEAPPWGKEQPLHLEPSPPASPTQSPDNLTCTETPLVIAGNPAYRSFSNSLSQSPCPRELGPDPLLARHLEEVEPEMPCVPQLSEPTTVPQPEPETWEQILRRNVLQHGAAAAPVSAPTSGYQEFVHAVEQGGTQASAVVGLGPPGEAGYKAFSSLLASSAVSPEKCGFGASSGEEGYKPFQDLIPGCPGDPAPVPVPLFTFGLDREPPRSPQSSHLPSSSPEHLGLEPGEKVEDMPKPPLPQEQATDPLVDSLGSGIVYSALTCHLCGHLKQCHGQEDGGQTPVMASPCCGCCCGDRSSPPTTPLRAPDPSPGGVPLEASLCPASLAPSGISEKSKSSSSFHPAPGNAQSSSQTPKIVNFVSVGPTYMRVS</sequence>
<evidence type="ECO:0000250" key="1"/>
<evidence type="ECO:0000250" key="2">
    <source>
        <dbReference type="UniProtKB" id="P16382"/>
    </source>
</evidence>
<evidence type="ECO:0000255" key="3"/>
<evidence type="ECO:0000255" key="4">
    <source>
        <dbReference type="PROSITE-ProRule" id="PRU00316"/>
    </source>
</evidence>
<evidence type="ECO:0000256" key="5">
    <source>
        <dbReference type="SAM" id="MobiDB-lite"/>
    </source>
</evidence>
<evidence type="ECO:0000269" key="6">
    <source>
    </source>
</evidence>
<evidence type="ECO:0000269" key="7">
    <source>
    </source>
</evidence>
<evidence type="ECO:0000269" key="8">
    <source>
    </source>
</evidence>
<evidence type="ECO:0000269" key="9">
    <source>
    </source>
</evidence>
<evidence type="ECO:0000269" key="10">
    <source>
    </source>
</evidence>
<evidence type="ECO:0000269" key="11">
    <source>
    </source>
</evidence>
<evidence type="ECO:0000269" key="12">
    <source>
    </source>
</evidence>
<evidence type="ECO:0000269" key="13">
    <source>
    </source>
</evidence>
<evidence type="ECO:0000269" key="14">
    <source>
    </source>
</evidence>
<evidence type="ECO:0000269" key="15">
    <source>
    </source>
</evidence>
<evidence type="ECO:0000269" key="16">
    <source>
    </source>
</evidence>
<evidence type="ECO:0000269" key="17">
    <source>
    </source>
</evidence>
<evidence type="ECO:0000269" key="18">
    <source>
    </source>
</evidence>
<evidence type="ECO:0000269" key="19">
    <source>
    </source>
</evidence>
<evidence type="ECO:0000269" key="20">
    <source>
    </source>
</evidence>
<evidence type="ECO:0000269" key="21">
    <source>
    </source>
</evidence>
<evidence type="ECO:0000269" key="22">
    <source>
    </source>
</evidence>
<evidence type="ECO:0000269" key="23">
    <source>
    </source>
</evidence>
<evidence type="ECO:0000269" key="24">
    <source>
    </source>
</evidence>
<evidence type="ECO:0000269" key="25">
    <source>
    </source>
</evidence>
<evidence type="ECO:0000269" key="26">
    <source ref="5"/>
</evidence>
<evidence type="ECO:0000303" key="27">
    <source>
    </source>
</evidence>
<evidence type="ECO:0000305" key="28"/>
<evidence type="ECO:0000305" key="29">
    <source>
    </source>
</evidence>
<evidence type="ECO:0007829" key="30">
    <source>
        <dbReference type="PDB" id="1IAR"/>
    </source>
</evidence>
<evidence type="ECO:0007829" key="31">
    <source>
        <dbReference type="PDB" id="1IRS"/>
    </source>
</evidence>
<evidence type="ECO:0007829" key="32">
    <source>
        <dbReference type="PDB" id="3BPO"/>
    </source>
</evidence>
<evidence type="ECO:0007829" key="33">
    <source>
        <dbReference type="PDB" id="6WGL"/>
    </source>
</evidence>
<evidence type="ECO:0007829" key="34">
    <source>
        <dbReference type="PDB" id="8K4Q"/>
    </source>
</evidence>
<feature type="signal peptide" evidence="1">
    <location>
        <begin position="1"/>
        <end position="25"/>
    </location>
</feature>
<feature type="chain" id="PRO_0000010887" description="Interleukin-4 receptor subunit alpha">
    <location>
        <begin position="26"/>
        <end position="825"/>
    </location>
</feature>
<feature type="chain" id="PRO_0000010888" description="Soluble interleukin-4 receptor subunit alpha">
    <location>
        <begin position="26"/>
        <end status="unknown"/>
    </location>
</feature>
<feature type="topological domain" description="Extracellular" evidence="3">
    <location>
        <begin position="26"/>
        <end position="232"/>
    </location>
</feature>
<feature type="transmembrane region" description="Helical" evidence="3">
    <location>
        <begin position="233"/>
        <end position="256"/>
    </location>
</feature>
<feature type="topological domain" description="Cytoplasmic" evidence="3">
    <location>
        <begin position="257"/>
        <end position="825"/>
    </location>
</feature>
<feature type="domain" description="Fibronectin type-III" evidence="4">
    <location>
        <begin position="125"/>
        <end position="224"/>
    </location>
</feature>
<feature type="region of interest" description="Disordered" evidence="5">
    <location>
        <begin position="373"/>
        <end position="397"/>
    </location>
</feature>
<feature type="region of interest" description="Disordered" evidence="5">
    <location>
        <begin position="433"/>
        <end position="485"/>
    </location>
</feature>
<feature type="region of interest" description="Required for IRS1 activation and IL4-induced cell growth">
    <location>
        <begin position="437"/>
        <end position="557"/>
    </location>
</feature>
<feature type="region of interest" description="Required for IL4-induced gene expression">
    <location>
        <begin position="558"/>
        <end position="657"/>
    </location>
</feature>
<feature type="region of interest" description="Disordered" evidence="5">
    <location>
        <begin position="651"/>
        <end position="703"/>
    </location>
</feature>
<feature type="region of interest" description="Disordered" evidence="5">
    <location>
        <begin position="782"/>
        <end position="809"/>
    </location>
</feature>
<feature type="short sequence motif" description="WSXWS motif">
    <location>
        <begin position="212"/>
        <end position="216"/>
    </location>
</feature>
<feature type="short sequence motif" description="Box 1 motif">
    <location>
        <begin position="262"/>
        <end position="270"/>
    </location>
</feature>
<feature type="short sequence motif" description="ITIM motif">
    <location>
        <begin position="711"/>
        <end position="716"/>
    </location>
</feature>
<feature type="compositionally biased region" description="Polar residues" evidence="5">
    <location>
        <begin position="475"/>
        <end position="485"/>
    </location>
</feature>
<feature type="compositionally biased region" description="Low complexity" evidence="5">
    <location>
        <begin position="665"/>
        <end position="677"/>
    </location>
</feature>
<feature type="compositionally biased region" description="Basic and acidic residues" evidence="5">
    <location>
        <begin position="678"/>
        <end position="690"/>
    </location>
</feature>
<feature type="site" description="Major IL4 binding determinant">
    <location>
        <position position="38"/>
    </location>
</feature>
<feature type="site" description="Minor IL4 binding determinant">
    <location>
        <position position="64"/>
    </location>
</feature>
<feature type="site" description="Minor IL4 binding determinant">
    <location>
        <position position="66"/>
    </location>
</feature>
<feature type="site" description="Minor IL4 binding determinant">
    <location>
        <position position="92"/>
    </location>
</feature>
<feature type="site" description="Minor IL4 binding determinant">
    <location>
        <position position="94"/>
    </location>
</feature>
<feature type="site" description="Major IL4 binding determinant">
    <location>
        <position position="97"/>
    </location>
</feature>
<feature type="site" description="Minor IL4 binding determinant">
    <location>
        <position position="152"/>
    </location>
</feature>
<feature type="site" description="Major IL4 binding determinant">
    <location>
        <position position="208"/>
    </location>
</feature>
<feature type="modified residue" description="Phosphotyrosine" evidence="20">
    <location>
        <position position="497"/>
    </location>
</feature>
<feature type="modified residue" description="Phosphotyrosine" evidence="29">
    <location>
        <position position="575"/>
    </location>
</feature>
<feature type="modified residue" description="Phosphotyrosine" evidence="29">
    <location>
        <position position="603"/>
    </location>
</feature>
<feature type="modified residue" description="Phosphotyrosine" evidence="29">
    <location>
        <position position="631"/>
    </location>
</feature>
<feature type="glycosylation site" description="N-linked (GlcNAc...) asparagine" evidence="3">
    <location>
        <position position="53"/>
    </location>
</feature>
<feature type="glycosylation site" description="N-linked (GlcNAc...) asparagine" evidence="3">
    <location>
        <position position="98"/>
    </location>
</feature>
<feature type="glycosylation site" description="N-linked (GlcNAc...) asparagine" evidence="3">
    <location>
        <position position="128"/>
    </location>
</feature>
<feature type="glycosylation site" description="N-linked (GlcNAc...) asparagine" evidence="3">
    <location>
        <position position="134"/>
    </location>
</feature>
<feature type="glycosylation site" description="N-linked (GlcNAc...) asparagine" evidence="3">
    <location>
        <position position="176"/>
    </location>
</feature>
<feature type="glycosylation site" description="N-linked (GlcNAc...) asparagine" evidence="3">
    <location>
        <position position="209"/>
    </location>
</feature>
<feature type="disulfide bond" evidence="1">
    <location>
        <begin position="34"/>
        <end position="44"/>
    </location>
</feature>
<feature type="disulfide bond" evidence="1">
    <location>
        <begin position="74"/>
        <end position="86"/>
    </location>
</feature>
<feature type="splice variant" id="VSP_053738" description="In isoform 3." evidence="27">
    <original>MGWLCSGLLFPVSCLVLLQVASS</original>
    <variation>MQKDARRE</variation>
    <location>
        <begin position="1"/>
        <end position="23"/>
    </location>
</feature>
<feature type="splice variant" id="VSP_011116" description="In isoform 2." evidence="28">
    <original>YRE</original>
    <variation>NIC</variation>
    <location>
        <begin position="225"/>
        <end position="227"/>
    </location>
</feature>
<feature type="splice variant" id="VSP_011117" description="In isoform 2." evidence="28">
    <location>
        <begin position="228"/>
        <end position="825"/>
    </location>
</feature>
<feature type="sequence variant" id="VAR_059302" description="In dbSNP:rs1805010.">
    <original>I</original>
    <variation>F</variation>
    <location>
        <position position="75"/>
    </location>
</feature>
<feature type="sequence variant" id="VAR_059303" description="In dbSNP:rs1805010.">
    <original>I</original>
    <variation>L</variation>
    <location>
        <position position="75"/>
    </location>
</feature>
<feature type="sequence variant" id="VAR_008034" description="Probable risk factor for atopic asthma and cedar pollen sensitization; dbSNP:rs1805010." evidence="9 16 23 25 26">
    <original>I</original>
    <variation>V</variation>
    <location>
        <position position="75"/>
    </location>
</feature>
<feature type="sequence variant" id="VAR_019999" description="In dbSNP:rs6413500.">
    <original>S</original>
    <variation>L</variation>
    <location>
        <position position="387"/>
    </location>
</feature>
<feature type="sequence variant" id="VAR_011657" description="Probable risk factor for cedar pollen sensitization; dbSNP:rs1805011." evidence="12 16 23 26">
    <original>E</original>
    <variation>A</variation>
    <location>
        <position position="400"/>
    </location>
</feature>
<feature type="sequence variant" id="VAR_011658" description="In dbSNP:rs1805012." evidence="12 23 26">
    <original>C</original>
    <variation>R</variation>
    <location>
        <position position="431"/>
    </location>
</feature>
<feature type="sequence variant" id="VAR_011659" description="In dbSNP:rs1805013." evidence="12 23 26">
    <original>S</original>
    <variation>L</variation>
    <location>
        <position position="436"/>
    </location>
</feature>
<feature type="sequence variant" id="VAR_049164" description="In dbSNP:rs35606110.">
    <original>A</original>
    <variation>T</variation>
    <location>
        <position position="492"/>
    </location>
</feature>
<feature type="sequence variant" id="VAR_049165" description="In dbSNP:rs34727572.">
    <original>A</original>
    <variation>V</variation>
    <location>
        <position position="492"/>
    </location>
</feature>
<feature type="sequence variant" id="VAR_011660" description="Lowered total IgE concentration; dbSNP:rs1805015." evidence="7 12 26">
    <original>S</original>
    <variation>P</variation>
    <location>
        <position position="503"/>
    </location>
</feature>
<feature type="sequence variant" id="VAR_008035" description="Probable risk factor for atopic dermatitis; lowered total IgE concentration; no effect on IL4-induced signal transduction; dbSNP:rs1801275." evidence="6 7 11 12 24 26">
    <original>Q</original>
    <variation>R</variation>
    <location>
        <position position="576"/>
    </location>
</feature>
<feature type="sequence variant" id="VAR_011661" description="In dbSNP:rs3024677." evidence="12 26">
    <original>V</original>
    <variation>I</variation>
    <location>
        <position position="579"/>
    </location>
</feature>
<feature type="sequence variant" id="VAR_020000" description="In dbSNP:rs3024678." evidence="26">
    <original>P</original>
    <variation>S</variation>
    <location>
        <position position="675"/>
    </location>
</feature>
<feature type="sequence variant" id="VAR_011662" description="In dbSNP:rs1805016." evidence="10 26">
    <original>S</original>
    <variation>A</variation>
    <location>
        <position position="752"/>
    </location>
</feature>
<feature type="sequence variant" id="VAR_011663" description="In 1.8% of the population; dbSNP:rs1805014." evidence="13 23">
    <original>S</original>
    <variation>P</variation>
    <location>
        <position position="786"/>
    </location>
</feature>
<feature type="mutagenesis site" description="700-fold reduction in IL4 binding." evidence="15">
    <original>Y</original>
    <variation>A</variation>
    <location>
        <position position="38"/>
    </location>
</feature>
<feature type="mutagenesis site" description="25-fold reduction in IL4 binding." evidence="15">
    <original>Y</original>
    <variation>F</variation>
    <location>
        <position position="38"/>
    </location>
</feature>
<feature type="mutagenesis site" description="No effect on IL4 binding." evidence="15">
    <original>M</original>
    <variation>A</variation>
    <location>
        <position position="39"/>
    </location>
</feature>
<feature type="mutagenesis site" description="No effect on IL4 binding." evidence="15">
    <original>S</original>
    <variation>A</variation>
    <location>
        <position position="40"/>
    </location>
</feature>
<feature type="mutagenesis site" description="100-fold reduction in IL4 binding." evidence="15">
    <original>L</original>
    <variation>A</variation>
    <location>
        <position position="64"/>
    </location>
</feature>
<feature type="mutagenesis site" description="45-fold reduction in IL4 binding." evidence="15">
    <original>F</original>
    <variation>A</variation>
    <location>
        <position position="66"/>
    </location>
</feature>
<feature type="mutagenesis site" description="No effect on IL4 binding." evidence="15">
    <original>L</original>
    <variation>A</variation>
    <location>
        <position position="67"/>
    </location>
</feature>
<feature type="mutagenesis site" description="No effect on IL4 binding." evidence="15">
    <original>L</original>
    <variation>A</variation>
    <location>
        <position position="68"/>
    </location>
</feature>
<feature type="mutagenesis site" description="Little effect on IL4 binding." evidence="15">
    <original>D</original>
    <variation>A</variation>
    <location>
        <position position="91"/>
    </location>
</feature>
<feature type="mutagenesis site" description="50-fold reduction in IL4 binding." evidence="15">
    <original>D</original>
    <variation>A</variation>
    <location>
        <position position="92"/>
    </location>
</feature>
<feature type="mutagenesis site" description="Little effect on IL4 binding." evidence="15">
    <original>V</original>
    <variation>A</variation>
    <location>
        <position position="93"/>
    </location>
</feature>
<feature type="mutagenesis site" description="35-fold reduction in IL4 binding." evidence="15">
    <original>V</original>
    <variation>A</variation>
    <location>
        <position position="94"/>
    </location>
</feature>
<feature type="mutagenesis site" description="No effect on IL4 binding." evidence="15">
    <original>S</original>
    <variation>A</variation>
    <location>
        <position position="95"/>
    </location>
</feature>
<feature type="mutagenesis site" description="&gt;150-fold reduction in IL4 binding." evidence="15">
    <original>D</original>
    <variation>A</variation>
    <variation>N</variation>
    <location>
        <position position="97"/>
    </location>
</feature>
<feature type="mutagenesis site" description="No effect on IL4 binding." evidence="15">
    <original>N</original>
    <variation>A</variation>
    <location>
        <position position="98"/>
    </location>
</feature>
<feature type="mutagenesis site" description="10-fold reduction in IL4 binding." evidence="15">
    <original>Y</original>
    <variation>A</variation>
    <location>
        <position position="99"/>
    </location>
</feature>
<feature type="mutagenesis site" description="Little effect on IL4 binding." evidence="15">
    <original>K</original>
    <variation>A</variation>
    <location>
        <position position="116"/>
    </location>
</feature>
<feature type="mutagenesis site" description="Little effect on IL4 binding." evidence="15">
    <original>P</original>
    <variation>A</variation>
    <location>
        <position position="117"/>
    </location>
</feature>
<feature type="mutagenesis site" description="No effect on IL4 binding." evidence="15">
    <original>S</original>
    <variation>A</variation>
    <location>
        <position position="118"/>
    </location>
</feature>
<feature type="mutagenesis site" description="No effect on IL4 binding." evidence="15">
    <original>E</original>
    <variation>A</variation>
    <location>
        <position position="119"/>
    </location>
</feature>
<feature type="mutagenesis site" description="Little effect on IL4 binding." evidence="15">
    <original>D</original>
    <variation>A</variation>
    <location>
        <position position="150"/>
    </location>
</feature>
<feature type="mutagenesis site" description="Little effect on IL4 binding." evidence="15">
    <original>N</original>
    <variation>A</variation>
    <location>
        <position position="151"/>
    </location>
</feature>
<feature type="mutagenesis site" description="40-fold reduction in IL4 binding." evidence="15">
    <original>Y</original>
    <variation>A</variation>
    <location>
        <position position="152"/>
    </location>
</feature>
<feature type="mutagenesis site" description="No effect on IL4 binding." evidence="15">
    <original>Y</original>
    <variation>F</variation>
    <location>
        <position position="152"/>
    </location>
</feature>
<feature type="mutagenesis site" description="Little effect on IL4 binding." evidence="15">
    <original>L</original>
    <variation>A</variation>
    <location>
        <position position="153"/>
    </location>
</feature>
<feature type="mutagenesis site" description="Little effect on IL4 binding." evidence="15">
    <original>Y</original>
    <variation>A</variation>
    <location>
        <position position="154"/>
    </location>
</feature>
<feature type="mutagenesis site" description="500-fold reduction in IL4 binding." evidence="15">
    <original>Y</original>
    <variation>A</variation>
    <location>
        <position position="208"/>
    </location>
</feature>
<feature type="mutagenesis site" description="200-fold reduction in IL4 binding." evidence="15">
    <original>Y</original>
    <variation>F</variation>
    <location>
        <position position="208"/>
    </location>
</feature>
<feature type="mutagenesis site" description="Abolishes IRS1 tyrosine phosphorylation. No cell proliferation." evidence="20">
    <original>Y</original>
    <variation>F</variation>
    <location>
        <position position="497"/>
    </location>
</feature>
<feature type="mutagenesis site" description="Loss of CD23 gene induction; when associated with F-603 and F-631." evidence="6 21">
    <original>Y</original>
    <variation>F</variation>
    <location>
        <position position="575"/>
    </location>
</feature>
<feature type="mutagenesis site" description="Loss of CD23 gene induction; when associated with F-575 and F-631." evidence="21">
    <original>Y</original>
    <variation>F</variation>
    <location>
        <position position="603"/>
    </location>
</feature>
<feature type="mutagenesis site" description="Loss of CD23 gene induction; when associated with F-575 and F-603." evidence="21">
    <original>Y</original>
    <variation>F</variation>
    <location>
        <position position="631"/>
    </location>
</feature>
<feature type="mutagenesis site" description="Increased IL4-induced cell proliferation and STAT6 activation." evidence="14">
    <original>Y</original>
    <variation>F</variation>
    <location>
        <position position="713"/>
    </location>
</feature>
<feature type="strand" evidence="30">
    <location>
        <begin position="28"/>
        <end position="36"/>
    </location>
</feature>
<feature type="strand" evidence="30">
    <location>
        <begin position="38"/>
        <end position="50"/>
    </location>
</feature>
<feature type="helix" evidence="30">
    <location>
        <begin position="54"/>
        <end position="57"/>
    </location>
</feature>
<feature type="strand" evidence="30">
    <location>
        <begin position="58"/>
        <end position="68"/>
    </location>
</feature>
<feature type="strand" evidence="30">
    <location>
        <begin position="72"/>
        <end position="74"/>
    </location>
</feature>
<feature type="strand" evidence="30">
    <location>
        <begin position="77"/>
        <end position="89"/>
    </location>
</feature>
<feature type="strand" evidence="30">
    <location>
        <begin position="99"/>
        <end position="105"/>
    </location>
</feature>
<feature type="strand" evidence="30">
    <location>
        <begin position="108"/>
        <end position="115"/>
    </location>
</feature>
<feature type="helix" evidence="30">
    <location>
        <begin position="117"/>
        <end position="119"/>
    </location>
</feature>
<feature type="strand" evidence="30">
    <location>
        <begin position="127"/>
        <end position="132"/>
    </location>
</feature>
<feature type="turn" evidence="32">
    <location>
        <begin position="135"/>
        <end position="137"/>
    </location>
</feature>
<feature type="strand" evidence="30">
    <location>
        <begin position="139"/>
        <end position="144"/>
    </location>
</feature>
<feature type="helix" evidence="30">
    <location>
        <begin position="154"/>
        <end position="156"/>
    </location>
</feature>
<feature type="strand" evidence="30">
    <location>
        <begin position="158"/>
        <end position="168"/>
    </location>
</feature>
<feature type="strand" evidence="30">
    <location>
        <begin position="172"/>
        <end position="177"/>
    </location>
</feature>
<feature type="strand" evidence="33">
    <location>
        <begin position="179"/>
        <end position="181"/>
    </location>
</feature>
<feature type="strand" evidence="30">
    <location>
        <begin position="183"/>
        <end position="186"/>
    </location>
</feature>
<feature type="helix" evidence="34">
    <location>
        <begin position="188"/>
        <end position="190"/>
    </location>
</feature>
<feature type="strand" evidence="32">
    <location>
        <begin position="193"/>
        <end position="195"/>
    </location>
</feature>
<feature type="strand" evidence="30">
    <location>
        <begin position="197"/>
        <end position="204"/>
    </location>
</feature>
<feature type="helix" evidence="30">
    <location>
        <begin position="206"/>
        <end position="208"/>
    </location>
</feature>
<feature type="strand" evidence="30">
    <location>
        <begin position="219"/>
        <end position="221"/>
    </location>
</feature>
<feature type="helix" evidence="31">
    <location>
        <begin position="495"/>
        <end position="497"/>
    </location>
</feature>
<keyword id="KW-0002">3D-structure</keyword>
<keyword id="KW-0025">Alternative splicing</keyword>
<keyword id="KW-1003">Cell membrane</keyword>
<keyword id="KW-1015">Disulfide bond</keyword>
<keyword id="KW-0325">Glycoprotein</keyword>
<keyword id="KW-0391">Immunity</keyword>
<keyword id="KW-0472">Membrane</keyword>
<keyword id="KW-0597">Phosphoprotein</keyword>
<keyword id="KW-1267">Proteomics identification</keyword>
<keyword id="KW-0675">Receptor</keyword>
<keyword id="KW-1185">Reference proteome</keyword>
<keyword id="KW-0964">Secreted</keyword>
<keyword id="KW-0732">Signal</keyword>
<keyword id="KW-0812">Transmembrane</keyword>
<keyword id="KW-1133">Transmembrane helix</keyword>